<feature type="chain" id="PRO_0000080475" description="Probable cyclin-H">
    <location>
        <begin position="1"/>
        <end position="335"/>
    </location>
</feature>
<sequence length="335" mass="38678">MAYVTSTQLYNWRFTQDELANQRQECNAAVRRRLSAQYRAKAEVKGGDVPAEPTFLTAEEEFIIVKRYIFAMKELFHQFSDSGLPVDVFGFAATYLKRFYLNNSVMDYFPREMMLTALYLACKAADYPLGLQTFAAHIPRNREHYSEIVVHSELFLMEKLQYDIWIHTPYRPLSGLLVDLLAYRKTQLGEPMTIEAGEVATADMMTSLKKEGYEIIHKWFQTDLCLTHSPSQFALAVLLELGQKHPDLGVEKFVKNSVCEYNSSDELMEQKWTALNEKMEQIQTMIGEFEFLSDLTYGSDLEAVLMQCRNPLYDPLSEEYAAAKEQAEKLMSFLD</sequence>
<organism>
    <name type="scientific">Echinococcus multilocularis</name>
    <name type="common">Fox tapeworm</name>
    <dbReference type="NCBI Taxonomy" id="6211"/>
    <lineage>
        <taxon>Eukaryota</taxon>
        <taxon>Metazoa</taxon>
        <taxon>Spiralia</taxon>
        <taxon>Lophotrochozoa</taxon>
        <taxon>Platyhelminthes</taxon>
        <taxon>Cestoda</taxon>
        <taxon>Eucestoda</taxon>
        <taxon>Cyclophyllidea</taxon>
        <taxon>Taeniidae</taxon>
        <taxon>Echinococcus</taxon>
    </lineage>
</organism>
<reference key="1">
    <citation type="journal article" date="2000" name="J. Biol. Chem.">
        <title>mRNA trans-splicing in the human parasitic cestode Echinococcus multilocularis.</title>
        <authorList>
            <person name="Brehm K."/>
            <person name="Jensen K."/>
            <person name="Frosch M."/>
        </authorList>
    </citation>
    <scope>NUCLEOTIDE SEQUENCE [MRNA]</scope>
    <source>
        <strain>H-95</strain>
    </source>
</reference>
<keyword id="KW-0131">Cell cycle</keyword>
<keyword id="KW-0195">Cyclin</keyword>
<keyword id="KW-0539">Nucleus</keyword>
<evidence type="ECO:0000250" key="1"/>
<evidence type="ECO:0000305" key="2"/>
<accession>Q9GP34</accession>
<protein>
    <recommendedName>
        <fullName>Probable cyclin-H</fullName>
    </recommendedName>
</protein>
<gene>
    <name type="primary">CYCH</name>
</gene>
<proteinExistence type="evidence at transcript level"/>
<dbReference type="EMBL" id="AJ292374">
    <property type="protein sequence ID" value="CAC18548.1"/>
    <property type="molecule type" value="mRNA"/>
</dbReference>
<dbReference type="SMR" id="Q9GP34"/>
<dbReference type="eggNOG" id="KOG2496">
    <property type="taxonomic scope" value="Eukaryota"/>
</dbReference>
<dbReference type="GO" id="GO:0005634">
    <property type="term" value="C:nucleus"/>
    <property type="evidence" value="ECO:0007669"/>
    <property type="project" value="UniProtKB-SubCell"/>
</dbReference>
<dbReference type="GO" id="GO:0016538">
    <property type="term" value="F:cyclin-dependent protein serine/threonine kinase regulator activity"/>
    <property type="evidence" value="ECO:0007669"/>
    <property type="project" value="InterPro"/>
</dbReference>
<dbReference type="GO" id="GO:0006357">
    <property type="term" value="P:regulation of transcription by RNA polymerase II"/>
    <property type="evidence" value="ECO:0007669"/>
    <property type="project" value="InterPro"/>
</dbReference>
<dbReference type="CDD" id="cd20524">
    <property type="entry name" value="CYCLIN_CCNH_rpt1"/>
    <property type="match status" value="1"/>
</dbReference>
<dbReference type="CDD" id="cd20525">
    <property type="entry name" value="CYCLIN_CCNH_rpt2"/>
    <property type="match status" value="1"/>
</dbReference>
<dbReference type="Gene3D" id="1.10.472.10">
    <property type="entry name" value="Cyclin-like"/>
    <property type="match status" value="2"/>
</dbReference>
<dbReference type="InterPro" id="IPR036915">
    <property type="entry name" value="Cyclin-like_sf"/>
</dbReference>
<dbReference type="InterPro" id="IPR043198">
    <property type="entry name" value="Cyclin/Ssn8"/>
</dbReference>
<dbReference type="InterPro" id="IPR031658">
    <property type="entry name" value="Cyclin_C_2"/>
</dbReference>
<dbReference type="InterPro" id="IPR006671">
    <property type="entry name" value="Cyclin_N"/>
</dbReference>
<dbReference type="PANTHER" id="PTHR10026">
    <property type="entry name" value="CYCLIN"/>
    <property type="match status" value="1"/>
</dbReference>
<dbReference type="Pfam" id="PF16899">
    <property type="entry name" value="Cyclin_C_2"/>
    <property type="match status" value="1"/>
</dbReference>
<dbReference type="Pfam" id="PF00134">
    <property type="entry name" value="Cyclin_N"/>
    <property type="match status" value="1"/>
</dbReference>
<dbReference type="SUPFAM" id="SSF47954">
    <property type="entry name" value="Cyclin-like"/>
    <property type="match status" value="2"/>
</dbReference>
<comment type="function">
    <text evidence="1">Regulates CDK7, the catalytic subunit of the CDK-activating kinase (CAK) enzymatic complex.</text>
</comment>
<comment type="subcellular location">
    <subcellularLocation>
        <location evidence="1">Nucleus</location>
    </subcellularLocation>
</comment>
<comment type="similarity">
    <text evidence="2">Belongs to the cyclin family. Cyclin C subfamily.</text>
</comment>
<name>CCNH_ECHMU</name>